<gene>
    <name evidence="1" type="primary">gpmA</name>
    <name type="synonym">gpm</name>
    <name type="ordered locus">BP0607</name>
</gene>
<accession>Q7VS43</accession>
<sequence>MYKLVLMRHGESQWNLENRFTGWTDVDLTETGREQARKAGELLKREGYAFDLAYTSVLKRAIRTLWIALDAMDAMYTPVGINWRLNERHYGQLQGLNKAETAAKYGDEQVLIWRRAYAIAPEPLDLEDPRHPRFDGRYAKIPADQLPATECLKDTVARVLPFWNESIAPAIRAGRRVLVAAHGNSLRALIKHLDNVSDDDIVGVNIPTGQPLVYELDEDLKPIRHYYLGDAAEIEAAMAAVAAQGKAKKD</sequence>
<evidence type="ECO:0000255" key="1">
    <source>
        <dbReference type="HAMAP-Rule" id="MF_01039"/>
    </source>
</evidence>
<comment type="function">
    <text evidence="1">Catalyzes the interconversion of 2-phosphoglycerate and 3-phosphoglycerate.</text>
</comment>
<comment type="catalytic activity">
    <reaction evidence="1">
        <text>(2R)-2-phosphoglycerate = (2R)-3-phosphoglycerate</text>
        <dbReference type="Rhea" id="RHEA:15901"/>
        <dbReference type="ChEBI" id="CHEBI:58272"/>
        <dbReference type="ChEBI" id="CHEBI:58289"/>
        <dbReference type="EC" id="5.4.2.11"/>
    </reaction>
</comment>
<comment type="pathway">
    <text evidence="1">Carbohydrate degradation; glycolysis; pyruvate from D-glyceraldehyde 3-phosphate: step 3/5.</text>
</comment>
<comment type="subunit">
    <text evidence="1">Homodimer.</text>
</comment>
<comment type="similarity">
    <text evidence="1">Belongs to the phosphoglycerate mutase family. BPG-dependent PGAM subfamily.</text>
</comment>
<dbReference type="EC" id="5.4.2.11" evidence="1"/>
<dbReference type="EMBL" id="BX640412">
    <property type="protein sequence ID" value="CAE44933.1"/>
    <property type="molecule type" value="Genomic_DNA"/>
</dbReference>
<dbReference type="RefSeq" id="NP_879450.1">
    <property type="nucleotide sequence ID" value="NC_002929.2"/>
</dbReference>
<dbReference type="RefSeq" id="WP_003807430.1">
    <property type="nucleotide sequence ID" value="NZ_CP039022.1"/>
</dbReference>
<dbReference type="SMR" id="Q7VS43"/>
<dbReference type="STRING" id="257313.BP0607"/>
<dbReference type="PaxDb" id="257313-BP0607"/>
<dbReference type="GeneID" id="69600333"/>
<dbReference type="KEGG" id="bpe:BP0607"/>
<dbReference type="PATRIC" id="fig|257313.5.peg.648"/>
<dbReference type="eggNOG" id="COG0588">
    <property type="taxonomic scope" value="Bacteria"/>
</dbReference>
<dbReference type="HOGENOM" id="CLU_033323_1_1_4"/>
<dbReference type="UniPathway" id="UPA00109">
    <property type="reaction ID" value="UER00186"/>
</dbReference>
<dbReference type="Proteomes" id="UP000002676">
    <property type="component" value="Chromosome"/>
</dbReference>
<dbReference type="GO" id="GO:0004619">
    <property type="term" value="F:phosphoglycerate mutase activity"/>
    <property type="evidence" value="ECO:0007669"/>
    <property type="project" value="UniProtKB-EC"/>
</dbReference>
<dbReference type="GO" id="GO:0006094">
    <property type="term" value="P:gluconeogenesis"/>
    <property type="evidence" value="ECO:0007669"/>
    <property type="project" value="UniProtKB-UniRule"/>
</dbReference>
<dbReference type="GO" id="GO:0006096">
    <property type="term" value="P:glycolytic process"/>
    <property type="evidence" value="ECO:0007669"/>
    <property type="project" value="UniProtKB-UniRule"/>
</dbReference>
<dbReference type="CDD" id="cd07067">
    <property type="entry name" value="HP_PGM_like"/>
    <property type="match status" value="1"/>
</dbReference>
<dbReference type="FunFam" id="3.40.50.1240:FF:000003">
    <property type="entry name" value="2,3-bisphosphoglycerate-dependent phosphoglycerate mutase"/>
    <property type="match status" value="1"/>
</dbReference>
<dbReference type="Gene3D" id="3.40.50.1240">
    <property type="entry name" value="Phosphoglycerate mutase-like"/>
    <property type="match status" value="1"/>
</dbReference>
<dbReference type="HAMAP" id="MF_01039">
    <property type="entry name" value="PGAM_GpmA"/>
    <property type="match status" value="1"/>
</dbReference>
<dbReference type="InterPro" id="IPR013078">
    <property type="entry name" value="His_Pase_superF_clade-1"/>
</dbReference>
<dbReference type="InterPro" id="IPR029033">
    <property type="entry name" value="His_PPase_superfam"/>
</dbReference>
<dbReference type="InterPro" id="IPR001345">
    <property type="entry name" value="PG/BPGM_mutase_AS"/>
</dbReference>
<dbReference type="InterPro" id="IPR005952">
    <property type="entry name" value="Phosphogly_mut1"/>
</dbReference>
<dbReference type="NCBIfam" id="TIGR01258">
    <property type="entry name" value="pgm_1"/>
    <property type="match status" value="1"/>
</dbReference>
<dbReference type="NCBIfam" id="NF010713">
    <property type="entry name" value="PRK14115.1"/>
    <property type="match status" value="1"/>
</dbReference>
<dbReference type="PANTHER" id="PTHR11931">
    <property type="entry name" value="PHOSPHOGLYCERATE MUTASE"/>
    <property type="match status" value="1"/>
</dbReference>
<dbReference type="Pfam" id="PF00300">
    <property type="entry name" value="His_Phos_1"/>
    <property type="match status" value="2"/>
</dbReference>
<dbReference type="PIRSF" id="PIRSF000709">
    <property type="entry name" value="6PFK_2-Ptase"/>
    <property type="match status" value="1"/>
</dbReference>
<dbReference type="SMART" id="SM00855">
    <property type="entry name" value="PGAM"/>
    <property type="match status" value="1"/>
</dbReference>
<dbReference type="SUPFAM" id="SSF53254">
    <property type="entry name" value="Phosphoglycerate mutase-like"/>
    <property type="match status" value="1"/>
</dbReference>
<dbReference type="PROSITE" id="PS00175">
    <property type="entry name" value="PG_MUTASE"/>
    <property type="match status" value="1"/>
</dbReference>
<feature type="chain" id="PRO_0000179854" description="2,3-bisphosphoglycerate-dependent phosphoglycerate mutase">
    <location>
        <begin position="1"/>
        <end position="250"/>
    </location>
</feature>
<feature type="active site" description="Tele-phosphohistidine intermediate" evidence="1">
    <location>
        <position position="9"/>
    </location>
</feature>
<feature type="active site" description="Proton donor/acceptor" evidence="1">
    <location>
        <position position="87"/>
    </location>
</feature>
<feature type="binding site" evidence="1">
    <location>
        <begin position="8"/>
        <end position="15"/>
    </location>
    <ligand>
        <name>substrate</name>
    </ligand>
</feature>
<feature type="binding site" evidence="1">
    <location>
        <begin position="21"/>
        <end position="22"/>
    </location>
    <ligand>
        <name>substrate</name>
    </ligand>
</feature>
<feature type="binding site" evidence="1">
    <location>
        <position position="60"/>
    </location>
    <ligand>
        <name>substrate</name>
    </ligand>
</feature>
<feature type="binding site" evidence="1">
    <location>
        <begin position="87"/>
        <end position="90"/>
    </location>
    <ligand>
        <name>substrate</name>
    </ligand>
</feature>
<feature type="binding site" evidence="1">
    <location>
        <position position="98"/>
    </location>
    <ligand>
        <name>substrate</name>
    </ligand>
</feature>
<feature type="binding site" evidence="1">
    <location>
        <begin position="114"/>
        <end position="115"/>
    </location>
    <ligand>
        <name>substrate</name>
    </ligand>
</feature>
<feature type="binding site" evidence="1">
    <location>
        <begin position="183"/>
        <end position="184"/>
    </location>
    <ligand>
        <name>substrate</name>
    </ligand>
</feature>
<feature type="site" description="Transition state stabilizer" evidence="1">
    <location>
        <position position="182"/>
    </location>
</feature>
<organism>
    <name type="scientific">Bordetella pertussis (strain Tohama I / ATCC BAA-589 / NCTC 13251)</name>
    <dbReference type="NCBI Taxonomy" id="257313"/>
    <lineage>
        <taxon>Bacteria</taxon>
        <taxon>Pseudomonadati</taxon>
        <taxon>Pseudomonadota</taxon>
        <taxon>Betaproteobacteria</taxon>
        <taxon>Burkholderiales</taxon>
        <taxon>Alcaligenaceae</taxon>
        <taxon>Bordetella</taxon>
    </lineage>
</organism>
<name>GPMA_BORPE</name>
<proteinExistence type="inferred from homology"/>
<keyword id="KW-0312">Gluconeogenesis</keyword>
<keyword id="KW-0324">Glycolysis</keyword>
<keyword id="KW-0413">Isomerase</keyword>
<keyword id="KW-1185">Reference proteome</keyword>
<protein>
    <recommendedName>
        <fullName evidence="1">2,3-bisphosphoglycerate-dependent phosphoglycerate mutase</fullName>
        <shortName evidence="1">BPG-dependent PGAM</shortName>
        <shortName evidence="1">PGAM</shortName>
        <shortName evidence="1">Phosphoglyceromutase</shortName>
        <shortName evidence="1">dPGM</shortName>
        <ecNumber evidence="1">5.4.2.11</ecNumber>
    </recommendedName>
</protein>
<reference key="1">
    <citation type="journal article" date="2003" name="Nat. Genet.">
        <title>Comparative analysis of the genome sequences of Bordetella pertussis, Bordetella parapertussis and Bordetella bronchiseptica.</title>
        <authorList>
            <person name="Parkhill J."/>
            <person name="Sebaihia M."/>
            <person name="Preston A."/>
            <person name="Murphy L.D."/>
            <person name="Thomson N.R."/>
            <person name="Harris D.E."/>
            <person name="Holden M.T.G."/>
            <person name="Churcher C.M."/>
            <person name="Bentley S.D."/>
            <person name="Mungall K.L."/>
            <person name="Cerdeno-Tarraga A.-M."/>
            <person name="Temple L."/>
            <person name="James K.D."/>
            <person name="Harris B."/>
            <person name="Quail M.A."/>
            <person name="Achtman M."/>
            <person name="Atkin R."/>
            <person name="Baker S."/>
            <person name="Basham D."/>
            <person name="Bason N."/>
            <person name="Cherevach I."/>
            <person name="Chillingworth T."/>
            <person name="Collins M."/>
            <person name="Cronin A."/>
            <person name="Davis P."/>
            <person name="Doggett J."/>
            <person name="Feltwell T."/>
            <person name="Goble A."/>
            <person name="Hamlin N."/>
            <person name="Hauser H."/>
            <person name="Holroyd S."/>
            <person name="Jagels K."/>
            <person name="Leather S."/>
            <person name="Moule S."/>
            <person name="Norberczak H."/>
            <person name="O'Neil S."/>
            <person name="Ormond D."/>
            <person name="Price C."/>
            <person name="Rabbinowitsch E."/>
            <person name="Rutter S."/>
            <person name="Sanders M."/>
            <person name="Saunders D."/>
            <person name="Seeger K."/>
            <person name="Sharp S."/>
            <person name="Simmonds M."/>
            <person name="Skelton J."/>
            <person name="Squares R."/>
            <person name="Squares S."/>
            <person name="Stevens K."/>
            <person name="Unwin L."/>
            <person name="Whitehead S."/>
            <person name="Barrell B.G."/>
            <person name="Maskell D.J."/>
        </authorList>
    </citation>
    <scope>NUCLEOTIDE SEQUENCE [LARGE SCALE GENOMIC DNA]</scope>
    <source>
        <strain>Tohama I / ATCC BAA-589 / NCTC 13251</strain>
    </source>
</reference>